<organism>
    <name type="scientific">Thermus thermophilus (strain ATCC 27634 / DSM 579 / HB8)</name>
    <dbReference type="NCBI Taxonomy" id="300852"/>
    <lineage>
        <taxon>Bacteria</taxon>
        <taxon>Thermotogati</taxon>
        <taxon>Deinococcota</taxon>
        <taxon>Deinococci</taxon>
        <taxon>Thermales</taxon>
        <taxon>Thermaceae</taxon>
        <taxon>Thermus</taxon>
    </lineage>
</organism>
<sequence length="597" mass="65202">MAGYDVVVVGGGHAGLEAAWAAAALGVRVALVTVNPDRIGMMPCNPAVGGPGKSQLVAEVVALGGLMGRAADAAAIHTRVLNRSKGPAVQSLRVQVDRDLYALKAQEILAERPVEVLRGEVAALWVEGGRLLGVRTVDGRTLPAKAVVVAGGTFLSGVVWYGRKSRPAGRQGEPPARFLSQSLKAVGHTLRRFKTGTPPRIRADSVDFGRLEVVPPEVPPGSFTGNPGPHAARLPTWQTRTTARTHRLIRENLHLSPLYAGDIQGIGPRYCPSIEDKVVRFADKESHLLFVEPDGLSTTEVYLQGFSSSLPPELQEEMVRSLPGFERAVIQRYAYAVEYDSLDPTELTRGLQSRLLPGLFSAGQVNGTSGYEEAAAQGLLAGLNAARFALGLPEVHLPRESGYIGVLVDDLVGRGTDEPYRMMTSRVELRLLCRADNADERLTPLAVAWGLRPKEDLERVEAKYRRVAAELRRLQALRVEGVSGLQWLRRPENTYRALAERFPPSEPLSPEEAYQVEVRAKYAGYIERQERLREKMKDLEAFRIPEGMDFPKVPGLSREAAEKLSRHRPKSLAEAARIPGVRDSDLTALAVHLRRGA</sequence>
<feature type="chain" id="PRO_0000117204" description="tRNA uridine 5-carboxymethylaminomethyl modification enzyme MnmG">
    <location>
        <begin position="1"/>
        <end position="597"/>
    </location>
</feature>
<feature type="binding site" evidence="1">
    <location>
        <begin position="10"/>
        <end position="15"/>
    </location>
    <ligand>
        <name>FAD</name>
        <dbReference type="ChEBI" id="CHEBI:57692"/>
    </ligand>
</feature>
<feature type="binding site" evidence="1">
    <location>
        <begin position="267"/>
        <end position="281"/>
    </location>
    <ligand>
        <name>NAD(+)</name>
        <dbReference type="ChEBI" id="CHEBI:57540"/>
    </ligand>
</feature>
<proteinExistence type="inferred from homology"/>
<dbReference type="EMBL" id="AP008226">
    <property type="protein sequence ID" value="BAD71795.1"/>
    <property type="molecule type" value="Genomic_DNA"/>
</dbReference>
<dbReference type="RefSeq" id="WP_011229056.1">
    <property type="nucleotide sequence ID" value="NC_006461.1"/>
</dbReference>
<dbReference type="RefSeq" id="YP_145238.1">
    <property type="nucleotide sequence ID" value="NC_006461.1"/>
</dbReference>
<dbReference type="SMR" id="Q5SGV8"/>
<dbReference type="EnsemblBacteria" id="BAD71795">
    <property type="protein sequence ID" value="BAD71795"/>
    <property type="gene ID" value="BAD71795"/>
</dbReference>
<dbReference type="GeneID" id="3169842"/>
<dbReference type="KEGG" id="ttj:TTHA1972"/>
<dbReference type="PATRIC" id="fig|300852.9.peg.1943"/>
<dbReference type="eggNOG" id="COG0445">
    <property type="taxonomic scope" value="Bacteria"/>
</dbReference>
<dbReference type="HOGENOM" id="CLU_007831_2_2_0"/>
<dbReference type="PhylomeDB" id="Q5SGV8"/>
<dbReference type="Proteomes" id="UP000000532">
    <property type="component" value="Chromosome"/>
</dbReference>
<dbReference type="GO" id="GO:0005829">
    <property type="term" value="C:cytosol"/>
    <property type="evidence" value="ECO:0007669"/>
    <property type="project" value="TreeGrafter"/>
</dbReference>
<dbReference type="GO" id="GO:0050660">
    <property type="term" value="F:flavin adenine dinucleotide binding"/>
    <property type="evidence" value="ECO:0007669"/>
    <property type="project" value="UniProtKB-UniRule"/>
</dbReference>
<dbReference type="GO" id="GO:0030488">
    <property type="term" value="P:tRNA methylation"/>
    <property type="evidence" value="ECO:0007669"/>
    <property type="project" value="TreeGrafter"/>
</dbReference>
<dbReference type="GO" id="GO:0002098">
    <property type="term" value="P:tRNA wobble uridine modification"/>
    <property type="evidence" value="ECO:0007669"/>
    <property type="project" value="InterPro"/>
</dbReference>
<dbReference type="FunFam" id="1.10.150.570:FF:000001">
    <property type="entry name" value="tRNA uridine 5-carboxymethylaminomethyl modification enzyme MnmG"/>
    <property type="match status" value="1"/>
</dbReference>
<dbReference type="Gene3D" id="3.50.50.60">
    <property type="entry name" value="FAD/NAD(P)-binding domain"/>
    <property type="match status" value="2"/>
</dbReference>
<dbReference type="Gene3D" id="1.10.150.570">
    <property type="entry name" value="GidA associated domain, C-terminal subdomain"/>
    <property type="match status" value="1"/>
</dbReference>
<dbReference type="Gene3D" id="1.10.10.1800">
    <property type="entry name" value="tRNA uridine 5-carboxymethylaminomethyl modification enzyme MnmG/GidA"/>
    <property type="match status" value="1"/>
</dbReference>
<dbReference type="HAMAP" id="MF_00129">
    <property type="entry name" value="MnmG_GidA"/>
    <property type="match status" value="1"/>
</dbReference>
<dbReference type="InterPro" id="IPR036188">
    <property type="entry name" value="FAD/NAD-bd_sf"/>
</dbReference>
<dbReference type="InterPro" id="IPR049312">
    <property type="entry name" value="GIDA_C_N"/>
</dbReference>
<dbReference type="InterPro" id="IPR004416">
    <property type="entry name" value="MnmG"/>
</dbReference>
<dbReference type="InterPro" id="IPR002218">
    <property type="entry name" value="MnmG-rel"/>
</dbReference>
<dbReference type="InterPro" id="IPR020595">
    <property type="entry name" value="MnmG-rel_CS"/>
</dbReference>
<dbReference type="InterPro" id="IPR026904">
    <property type="entry name" value="MnmG_C"/>
</dbReference>
<dbReference type="InterPro" id="IPR047001">
    <property type="entry name" value="MnmG_C_subdom"/>
</dbReference>
<dbReference type="InterPro" id="IPR044920">
    <property type="entry name" value="MnmG_C_subdom_sf"/>
</dbReference>
<dbReference type="InterPro" id="IPR040131">
    <property type="entry name" value="MnmG_N"/>
</dbReference>
<dbReference type="NCBIfam" id="TIGR00136">
    <property type="entry name" value="mnmG_gidA"/>
    <property type="match status" value="1"/>
</dbReference>
<dbReference type="PANTHER" id="PTHR11806">
    <property type="entry name" value="GLUCOSE INHIBITED DIVISION PROTEIN A"/>
    <property type="match status" value="1"/>
</dbReference>
<dbReference type="PANTHER" id="PTHR11806:SF0">
    <property type="entry name" value="PROTEIN MTO1 HOMOLOG, MITOCHONDRIAL"/>
    <property type="match status" value="1"/>
</dbReference>
<dbReference type="Pfam" id="PF01134">
    <property type="entry name" value="GIDA"/>
    <property type="match status" value="1"/>
</dbReference>
<dbReference type="Pfam" id="PF21680">
    <property type="entry name" value="GIDA_C_1st"/>
    <property type="match status" value="1"/>
</dbReference>
<dbReference type="Pfam" id="PF13932">
    <property type="entry name" value="SAM_GIDA_C"/>
    <property type="match status" value="1"/>
</dbReference>
<dbReference type="SMART" id="SM01228">
    <property type="entry name" value="GIDA_assoc_3"/>
    <property type="match status" value="1"/>
</dbReference>
<dbReference type="SUPFAM" id="SSF51905">
    <property type="entry name" value="FAD/NAD(P)-binding domain"/>
    <property type="match status" value="1"/>
</dbReference>
<dbReference type="PROSITE" id="PS01280">
    <property type="entry name" value="GIDA_1"/>
    <property type="match status" value="1"/>
</dbReference>
<dbReference type="PROSITE" id="PS01281">
    <property type="entry name" value="GIDA_2"/>
    <property type="match status" value="1"/>
</dbReference>
<gene>
    <name evidence="1" type="primary">mnmG</name>
    <name evidence="1" type="synonym">gidA</name>
    <name type="ordered locus">TTHA1972</name>
</gene>
<name>MNMG_THET8</name>
<keyword id="KW-0963">Cytoplasm</keyword>
<keyword id="KW-0274">FAD</keyword>
<keyword id="KW-0285">Flavoprotein</keyword>
<keyword id="KW-0520">NAD</keyword>
<keyword id="KW-1185">Reference proteome</keyword>
<keyword id="KW-0819">tRNA processing</keyword>
<evidence type="ECO:0000255" key="1">
    <source>
        <dbReference type="HAMAP-Rule" id="MF_00129"/>
    </source>
</evidence>
<comment type="function">
    <text evidence="1">NAD-binding protein involved in the addition of a carboxymethylaminomethyl (cmnm) group at the wobble position (U34) of certain tRNAs, forming tRNA-cmnm(5)s(2)U34.</text>
</comment>
<comment type="cofactor">
    <cofactor evidence="1">
        <name>FAD</name>
        <dbReference type="ChEBI" id="CHEBI:57692"/>
    </cofactor>
</comment>
<comment type="subunit">
    <text evidence="1">Homodimer. Heterotetramer of two MnmE and two MnmG subunits.</text>
</comment>
<comment type="subcellular location">
    <subcellularLocation>
        <location evidence="1">Cytoplasm</location>
    </subcellularLocation>
</comment>
<comment type="similarity">
    <text evidence="1">Belongs to the MnmG family.</text>
</comment>
<reference key="1">
    <citation type="submission" date="2004-11" db="EMBL/GenBank/DDBJ databases">
        <title>Complete genome sequence of Thermus thermophilus HB8.</title>
        <authorList>
            <person name="Masui R."/>
            <person name="Kurokawa K."/>
            <person name="Nakagawa N."/>
            <person name="Tokunaga F."/>
            <person name="Koyama Y."/>
            <person name="Shibata T."/>
            <person name="Oshima T."/>
            <person name="Yokoyama S."/>
            <person name="Yasunaga T."/>
            <person name="Kuramitsu S."/>
        </authorList>
    </citation>
    <scope>NUCLEOTIDE SEQUENCE [LARGE SCALE GENOMIC DNA]</scope>
    <source>
        <strain>ATCC 27634 / DSM 579 / HB8</strain>
    </source>
</reference>
<accession>Q5SGV8</accession>
<protein>
    <recommendedName>
        <fullName evidence="1">tRNA uridine 5-carboxymethylaminomethyl modification enzyme MnmG</fullName>
    </recommendedName>
    <alternativeName>
        <fullName evidence="1">Glucose-inhibited division protein A</fullName>
    </alternativeName>
</protein>